<keyword id="KW-0030">Aminoacyl-tRNA synthetase</keyword>
<keyword id="KW-0067">ATP-binding</keyword>
<keyword id="KW-0963">Cytoplasm</keyword>
<keyword id="KW-0436">Ligase</keyword>
<keyword id="KW-0460">Magnesium</keyword>
<keyword id="KW-0479">Metal-binding</keyword>
<keyword id="KW-0547">Nucleotide-binding</keyword>
<keyword id="KW-0648">Protein biosynthesis</keyword>
<keyword id="KW-0694">RNA-binding</keyword>
<keyword id="KW-0820">tRNA-binding</keyword>
<protein>
    <recommendedName>
        <fullName evidence="1">Phenylalanine--tRNA ligase beta subunit</fullName>
        <ecNumber evidence="1">6.1.1.20</ecNumber>
    </recommendedName>
    <alternativeName>
        <fullName evidence="1">Phenylalanyl-tRNA synthetase beta subunit</fullName>
        <shortName evidence="1">PheRS</shortName>
    </alternativeName>
</protein>
<accession>Q31AV5</accession>
<gene>
    <name evidence="1" type="primary">pheT</name>
    <name type="ordered locus">PMT9312_0930</name>
</gene>
<comment type="catalytic activity">
    <reaction evidence="1">
        <text>tRNA(Phe) + L-phenylalanine + ATP = L-phenylalanyl-tRNA(Phe) + AMP + diphosphate + H(+)</text>
        <dbReference type="Rhea" id="RHEA:19413"/>
        <dbReference type="Rhea" id="RHEA-COMP:9668"/>
        <dbReference type="Rhea" id="RHEA-COMP:9699"/>
        <dbReference type="ChEBI" id="CHEBI:15378"/>
        <dbReference type="ChEBI" id="CHEBI:30616"/>
        <dbReference type="ChEBI" id="CHEBI:33019"/>
        <dbReference type="ChEBI" id="CHEBI:58095"/>
        <dbReference type="ChEBI" id="CHEBI:78442"/>
        <dbReference type="ChEBI" id="CHEBI:78531"/>
        <dbReference type="ChEBI" id="CHEBI:456215"/>
        <dbReference type="EC" id="6.1.1.20"/>
    </reaction>
</comment>
<comment type="cofactor">
    <cofactor evidence="1">
        <name>Mg(2+)</name>
        <dbReference type="ChEBI" id="CHEBI:18420"/>
    </cofactor>
    <text evidence="1">Binds 2 magnesium ions per tetramer.</text>
</comment>
<comment type="subunit">
    <text evidence="1">Tetramer of two alpha and two beta subunits.</text>
</comment>
<comment type="subcellular location">
    <subcellularLocation>
        <location evidence="1">Cytoplasm</location>
    </subcellularLocation>
</comment>
<comment type="similarity">
    <text evidence="1">Belongs to the phenylalanyl-tRNA synthetase beta subunit family. Type 1 subfamily.</text>
</comment>
<evidence type="ECO:0000255" key="1">
    <source>
        <dbReference type="HAMAP-Rule" id="MF_00283"/>
    </source>
</evidence>
<organism>
    <name type="scientific">Prochlorococcus marinus (strain MIT 9312)</name>
    <dbReference type="NCBI Taxonomy" id="74546"/>
    <lineage>
        <taxon>Bacteria</taxon>
        <taxon>Bacillati</taxon>
        <taxon>Cyanobacteriota</taxon>
        <taxon>Cyanophyceae</taxon>
        <taxon>Synechococcales</taxon>
        <taxon>Prochlorococcaceae</taxon>
        <taxon>Prochlorococcus</taxon>
    </lineage>
</organism>
<feature type="chain" id="PRO_0000232074" description="Phenylalanine--tRNA ligase beta subunit">
    <location>
        <begin position="1"/>
        <end position="814"/>
    </location>
</feature>
<feature type="domain" description="tRNA-binding" evidence="1">
    <location>
        <begin position="39"/>
        <end position="153"/>
    </location>
</feature>
<feature type="domain" description="B5" evidence="1">
    <location>
        <begin position="414"/>
        <end position="500"/>
    </location>
</feature>
<feature type="domain" description="FDX-ACB" evidence="1">
    <location>
        <begin position="720"/>
        <end position="813"/>
    </location>
</feature>
<feature type="binding site" evidence="1">
    <location>
        <position position="478"/>
    </location>
    <ligand>
        <name>Mg(2+)</name>
        <dbReference type="ChEBI" id="CHEBI:18420"/>
        <note>shared with alpha subunit</note>
    </ligand>
</feature>
<feature type="binding site" evidence="1">
    <location>
        <position position="484"/>
    </location>
    <ligand>
        <name>Mg(2+)</name>
        <dbReference type="ChEBI" id="CHEBI:18420"/>
        <note>shared with alpha subunit</note>
    </ligand>
</feature>
<feature type="binding site" evidence="1">
    <location>
        <position position="487"/>
    </location>
    <ligand>
        <name>Mg(2+)</name>
        <dbReference type="ChEBI" id="CHEBI:18420"/>
        <note>shared with alpha subunit</note>
    </ligand>
</feature>
<feature type="binding site" evidence="1">
    <location>
        <position position="488"/>
    </location>
    <ligand>
        <name>Mg(2+)</name>
        <dbReference type="ChEBI" id="CHEBI:18420"/>
        <note>shared with alpha subunit</note>
    </ligand>
</feature>
<dbReference type="EC" id="6.1.1.20" evidence="1"/>
<dbReference type="EMBL" id="CP000111">
    <property type="protein sequence ID" value="ABB49990.1"/>
    <property type="molecule type" value="Genomic_DNA"/>
</dbReference>
<dbReference type="RefSeq" id="WP_011376484.1">
    <property type="nucleotide sequence ID" value="NC_007577.1"/>
</dbReference>
<dbReference type="SMR" id="Q31AV5"/>
<dbReference type="STRING" id="74546.PMT9312_0930"/>
<dbReference type="KEGG" id="pmi:PMT9312_0930"/>
<dbReference type="eggNOG" id="COG0072">
    <property type="taxonomic scope" value="Bacteria"/>
</dbReference>
<dbReference type="HOGENOM" id="CLU_016891_0_0_3"/>
<dbReference type="OrthoDB" id="9805455at2"/>
<dbReference type="Proteomes" id="UP000002715">
    <property type="component" value="Chromosome"/>
</dbReference>
<dbReference type="GO" id="GO:0009328">
    <property type="term" value="C:phenylalanine-tRNA ligase complex"/>
    <property type="evidence" value="ECO:0007669"/>
    <property type="project" value="TreeGrafter"/>
</dbReference>
<dbReference type="GO" id="GO:0005524">
    <property type="term" value="F:ATP binding"/>
    <property type="evidence" value="ECO:0007669"/>
    <property type="project" value="UniProtKB-UniRule"/>
</dbReference>
<dbReference type="GO" id="GO:0000287">
    <property type="term" value="F:magnesium ion binding"/>
    <property type="evidence" value="ECO:0007669"/>
    <property type="project" value="UniProtKB-UniRule"/>
</dbReference>
<dbReference type="GO" id="GO:0004826">
    <property type="term" value="F:phenylalanine-tRNA ligase activity"/>
    <property type="evidence" value="ECO:0007669"/>
    <property type="project" value="UniProtKB-UniRule"/>
</dbReference>
<dbReference type="GO" id="GO:0000049">
    <property type="term" value="F:tRNA binding"/>
    <property type="evidence" value="ECO:0007669"/>
    <property type="project" value="UniProtKB-KW"/>
</dbReference>
<dbReference type="GO" id="GO:0006432">
    <property type="term" value="P:phenylalanyl-tRNA aminoacylation"/>
    <property type="evidence" value="ECO:0007669"/>
    <property type="project" value="UniProtKB-UniRule"/>
</dbReference>
<dbReference type="CDD" id="cd00769">
    <property type="entry name" value="PheRS_beta_core"/>
    <property type="match status" value="1"/>
</dbReference>
<dbReference type="CDD" id="cd02796">
    <property type="entry name" value="tRNA_bind_bactPheRS"/>
    <property type="match status" value="1"/>
</dbReference>
<dbReference type="FunFam" id="2.40.50.140:FF:000045">
    <property type="entry name" value="Phenylalanine--tRNA ligase beta subunit"/>
    <property type="match status" value="1"/>
</dbReference>
<dbReference type="Gene3D" id="3.30.56.10">
    <property type="match status" value="2"/>
</dbReference>
<dbReference type="Gene3D" id="3.30.930.10">
    <property type="entry name" value="Bira Bifunctional Protein, Domain 2"/>
    <property type="match status" value="1"/>
</dbReference>
<dbReference type="Gene3D" id="3.30.70.380">
    <property type="entry name" value="Ferrodoxin-fold anticodon-binding domain"/>
    <property type="match status" value="1"/>
</dbReference>
<dbReference type="Gene3D" id="2.40.50.140">
    <property type="entry name" value="Nucleic acid-binding proteins"/>
    <property type="match status" value="1"/>
</dbReference>
<dbReference type="Gene3D" id="3.50.40.10">
    <property type="entry name" value="Phenylalanyl-trna Synthetase, Chain B, domain 3"/>
    <property type="match status" value="1"/>
</dbReference>
<dbReference type="HAMAP" id="MF_00283">
    <property type="entry name" value="Phe_tRNA_synth_beta1"/>
    <property type="match status" value="1"/>
</dbReference>
<dbReference type="InterPro" id="IPR045864">
    <property type="entry name" value="aa-tRNA-synth_II/BPL/LPL"/>
</dbReference>
<dbReference type="InterPro" id="IPR005146">
    <property type="entry name" value="B3/B4_tRNA-bd"/>
</dbReference>
<dbReference type="InterPro" id="IPR009061">
    <property type="entry name" value="DNA-bd_dom_put_sf"/>
</dbReference>
<dbReference type="InterPro" id="IPR005121">
    <property type="entry name" value="Fdx_antiC-bd"/>
</dbReference>
<dbReference type="InterPro" id="IPR036690">
    <property type="entry name" value="Fdx_antiC-bd_sf"/>
</dbReference>
<dbReference type="InterPro" id="IPR012340">
    <property type="entry name" value="NA-bd_OB-fold"/>
</dbReference>
<dbReference type="InterPro" id="IPR045060">
    <property type="entry name" value="Phe-tRNA-ligase_IIc_bsu"/>
</dbReference>
<dbReference type="InterPro" id="IPR004532">
    <property type="entry name" value="Phe-tRNA-ligase_IIc_bsu_bact"/>
</dbReference>
<dbReference type="InterPro" id="IPR020825">
    <property type="entry name" value="Phe-tRNA_synthase-like_B3/B4"/>
</dbReference>
<dbReference type="InterPro" id="IPR041616">
    <property type="entry name" value="PheRS_beta_core"/>
</dbReference>
<dbReference type="InterPro" id="IPR002547">
    <property type="entry name" value="tRNA-bd_dom"/>
</dbReference>
<dbReference type="InterPro" id="IPR033714">
    <property type="entry name" value="tRNA_bind_bactPheRS"/>
</dbReference>
<dbReference type="InterPro" id="IPR005147">
    <property type="entry name" value="tRNA_synthase_B5-dom"/>
</dbReference>
<dbReference type="NCBIfam" id="TIGR00472">
    <property type="entry name" value="pheT_bact"/>
    <property type="match status" value="1"/>
</dbReference>
<dbReference type="NCBIfam" id="NF045760">
    <property type="entry name" value="YtpR"/>
    <property type="match status" value="1"/>
</dbReference>
<dbReference type="PANTHER" id="PTHR10947:SF0">
    <property type="entry name" value="PHENYLALANINE--TRNA LIGASE BETA SUBUNIT"/>
    <property type="match status" value="1"/>
</dbReference>
<dbReference type="PANTHER" id="PTHR10947">
    <property type="entry name" value="PHENYLALANYL-TRNA SYNTHETASE BETA CHAIN AND LEUCINE-RICH REPEAT-CONTAINING PROTEIN 47"/>
    <property type="match status" value="1"/>
</dbReference>
<dbReference type="Pfam" id="PF03483">
    <property type="entry name" value="B3_4"/>
    <property type="match status" value="1"/>
</dbReference>
<dbReference type="Pfam" id="PF03484">
    <property type="entry name" value="B5"/>
    <property type="match status" value="1"/>
</dbReference>
<dbReference type="Pfam" id="PF03147">
    <property type="entry name" value="FDX-ACB"/>
    <property type="match status" value="1"/>
</dbReference>
<dbReference type="Pfam" id="PF01588">
    <property type="entry name" value="tRNA_bind"/>
    <property type="match status" value="1"/>
</dbReference>
<dbReference type="Pfam" id="PF17759">
    <property type="entry name" value="tRNA_synthFbeta"/>
    <property type="match status" value="1"/>
</dbReference>
<dbReference type="SMART" id="SM00873">
    <property type="entry name" value="B3_4"/>
    <property type="match status" value="1"/>
</dbReference>
<dbReference type="SMART" id="SM00874">
    <property type="entry name" value="B5"/>
    <property type="match status" value="1"/>
</dbReference>
<dbReference type="SMART" id="SM00896">
    <property type="entry name" value="FDX-ACB"/>
    <property type="match status" value="1"/>
</dbReference>
<dbReference type="SUPFAM" id="SSF54991">
    <property type="entry name" value="Anticodon-binding domain of PheRS"/>
    <property type="match status" value="1"/>
</dbReference>
<dbReference type="SUPFAM" id="SSF55681">
    <property type="entry name" value="Class II aaRS and biotin synthetases"/>
    <property type="match status" value="1"/>
</dbReference>
<dbReference type="SUPFAM" id="SSF50249">
    <property type="entry name" value="Nucleic acid-binding proteins"/>
    <property type="match status" value="1"/>
</dbReference>
<dbReference type="SUPFAM" id="SSF56037">
    <property type="entry name" value="PheT/TilS domain"/>
    <property type="match status" value="1"/>
</dbReference>
<dbReference type="SUPFAM" id="SSF46955">
    <property type="entry name" value="Putative DNA-binding domain"/>
    <property type="match status" value="1"/>
</dbReference>
<dbReference type="PROSITE" id="PS51483">
    <property type="entry name" value="B5"/>
    <property type="match status" value="1"/>
</dbReference>
<dbReference type="PROSITE" id="PS51447">
    <property type="entry name" value="FDX_ACB"/>
    <property type="match status" value="1"/>
</dbReference>
<dbReference type="PROSITE" id="PS50886">
    <property type="entry name" value="TRBD"/>
    <property type="match status" value="1"/>
</dbReference>
<reference key="1">
    <citation type="journal article" date="2006" name="Science">
        <title>Genomic islands and the ecology and evolution of Prochlorococcus.</title>
        <authorList>
            <person name="Coleman M.L."/>
            <person name="Sullivan M.B."/>
            <person name="Martiny A.C."/>
            <person name="Steglich C."/>
            <person name="Barry K."/>
            <person name="Delong E.F."/>
            <person name="Chisholm S.W."/>
        </authorList>
    </citation>
    <scope>NUCLEOTIDE SEQUENCE [LARGE SCALE GENOMIC DNA]</scope>
    <source>
        <strain>MIT 9312</strain>
    </source>
</reference>
<proteinExistence type="inferred from homology"/>
<name>SYFB_PROM9</name>
<sequence length="814" mass="91363">MKVSQNWLKNLVEISSTPVDLSEKLSIGGFEVESLEDCSKNVNGVVLGKVLSVLKHDGSDKLSICQVDIGTSKNLQIICGARNIKPNVYVYVATVGAKLNAVDLTIKRSEIRGVMSEGMICSLQELGLEDSSEGIEIIDEDLALKHELGTPVSDLLQLNDFIYDLAITANRPDGMSVIGIAREISALLESKLSFPELNHKYNIHLNKGIKLCPEAITSNCIYTISCIDGVNGNKLSPIWLKDRIEKSGIKSINLLVDLTNYILLEQGQPLHAFDKEKLSNLIGKDVSPEDFSVRKAKDNESLVCLDGKKYELNENITVVTCSDKPVAIAGVIGGLETSVSNTTSSIYLEGAVFNPVTIRKSSKAVGIRTESSSRYEKGISSKNTISAVTRAMNLLEEYFSINLPIINTSNLKNNEDIFIKLRRSRIHKILGPLIINDQFEKRNISDTEIVDKLTLIGCSLKSKEYGWDVAVIPNRSQDLIREIDLIEEIARLIGYDRFDLNLPNPIKPGKLSSEQLALRKVKNGFTENGFNEVLSYSLVPEDKETLIKISNPLLLETSCLRDNIWKEHLEIVNRNIKAGQNSCYIFEIGNVFHKNTEFIQKEVLNGAIFGNKRFEKWVNSNKDNDLNYYQARGKLKEALSSLNIKIDDKPTDSIDFLHPGRTAKLIIEGKDAGYFGEIHPKLILEKKSLKIVYLFSINVDNLLGASTRKNKWIPIFKQYPIVPKIERDINFVFSKKFLISDITSLIKKTGKNLLEDVYLIDIFEDIKLGEDYISYTFRLSYRAQDKTLLDSDIKTIHSSIISNIEKSFQTKLRN</sequence>